<accession>Q01SZ5</accession>
<organism>
    <name type="scientific">Solibacter usitatus (strain Ellin6076)</name>
    <dbReference type="NCBI Taxonomy" id="234267"/>
    <lineage>
        <taxon>Bacteria</taxon>
        <taxon>Pseudomonadati</taxon>
        <taxon>Acidobacteriota</taxon>
        <taxon>Terriglobia</taxon>
        <taxon>Bryobacterales</taxon>
        <taxon>Solibacteraceae</taxon>
        <taxon>Candidatus Solibacter</taxon>
    </lineage>
</organism>
<sequence length="293" mass="32333">MDGVIVIDKPEGWTSHDVVNKVRRIAKTKKVGHLGTLDPIATGVLPLVIERATRLAQFYTRSEKIYEGLVRFGWSTSSYDRAGEPTSEKVEVQLTAEQLEHALENFRGEFLQRPPAVSAKKVEGKRSYELARKNMAVELEPVKVHVYELTLLALEGNLARLRAHCSGGTYMRSIAHDLGQALGCGAHLQELRRLASGEFELDQARTLEQLESLAAEDRLPDAIVPAGKLLPAFPSVFVDEITAAQIRNGRDFPASPFRSQPASKYVKAVTRTGDLVAIGEVVLPNLYHPTVVM</sequence>
<evidence type="ECO:0000255" key="1">
    <source>
        <dbReference type="HAMAP-Rule" id="MF_01080"/>
    </source>
</evidence>
<protein>
    <recommendedName>
        <fullName evidence="1">tRNA pseudouridine synthase B</fullName>
        <ecNumber evidence="1">5.4.99.25</ecNumber>
    </recommendedName>
    <alternativeName>
        <fullName evidence="1">tRNA pseudouridine(55) synthase</fullName>
        <shortName evidence="1">Psi55 synthase</shortName>
    </alternativeName>
    <alternativeName>
        <fullName evidence="1">tRNA pseudouridylate synthase</fullName>
    </alternativeName>
    <alternativeName>
        <fullName evidence="1">tRNA-uridine isomerase</fullName>
    </alternativeName>
</protein>
<keyword id="KW-0413">Isomerase</keyword>
<keyword id="KW-0819">tRNA processing</keyword>
<reference key="1">
    <citation type="journal article" date="2009" name="Appl. Environ. Microbiol.">
        <title>Three genomes from the phylum Acidobacteria provide insight into the lifestyles of these microorganisms in soils.</title>
        <authorList>
            <person name="Ward N.L."/>
            <person name="Challacombe J.F."/>
            <person name="Janssen P.H."/>
            <person name="Henrissat B."/>
            <person name="Coutinho P.M."/>
            <person name="Wu M."/>
            <person name="Xie G."/>
            <person name="Haft D.H."/>
            <person name="Sait M."/>
            <person name="Badger J."/>
            <person name="Barabote R.D."/>
            <person name="Bradley B."/>
            <person name="Brettin T.S."/>
            <person name="Brinkac L.M."/>
            <person name="Bruce D."/>
            <person name="Creasy T."/>
            <person name="Daugherty S.C."/>
            <person name="Davidsen T.M."/>
            <person name="DeBoy R.T."/>
            <person name="Detter J.C."/>
            <person name="Dodson R.J."/>
            <person name="Durkin A.S."/>
            <person name="Ganapathy A."/>
            <person name="Gwinn-Giglio M."/>
            <person name="Han C.S."/>
            <person name="Khouri H."/>
            <person name="Kiss H."/>
            <person name="Kothari S.P."/>
            <person name="Madupu R."/>
            <person name="Nelson K.E."/>
            <person name="Nelson W.C."/>
            <person name="Paulsen I."/>
            <person name="Penn K."/>
            <person name="Ren Q."/>
            <person name="Rosovitz M.J."/>
            <person name="Selengut J.D."/>
            <person name="Shrivastava S."/>
            <person name="Sullivan S.A."/>
            <person name="Tapia R."/>
            <person name="Thompson L.S."/>
            <person name="Watkins K.L."/>
            <person name="Yang Q."/>
            <person name="Yu C."/>
            <person name="Zafar N."/>
            <person name="Zhou L."/>
            <person name="Kuske C.R."/>
        </authorList>
    </citation>
    <scope>NUCLEOTIDE SEQUENCE [LARGE SCALE GENOMIC DNA]</scope>
    <source>
        <strain>Ellin6076</strain>
    </source>
</reference>
<proteinExistence type="inferred from homology"/>
<name>TRUB_SOLUE</name>
<gene>
    <name evidence="1" type="primary">truB</name>
    <name type="ordered locus">Acid_6299</name>
</gene>
<comment type="function">
    <text evidence="1">Responsible for synthesis of pseudouridine from uracil-55 in the psi GC loop of transfer RNAs.</text>
</comment>
<comment type="catalytic activity">
    <reaction evidence="1">
        <text>uridine(55) in tRNA = pseudouridine(55) in tRNA</text>
        <dbReference type="Rhea" id="RHEA:42532"/>
        <dbReference type="Rhea" id="RHEA-COMP:10101"/>
        <dbReference type="Rhea" id="RHEA-COMP:10102"/>
        <dbReference type="ChEBI" id="CHEBI:65314"/>
        <dbReference type="ChEBI" id="CHEBI:65315"/>
        <dbReference type="EC" id="5.4.99.25"/>
    </reaction>
</comment>
<comment type="similarity">
    <text evidence="1">Belongs to the pseudouridine synthase TruB family. Type 1 subfamily.</text>
</comment>
<feature type="chain" id="PRO_1000084687" description="tRNA pseudouridine synthase B">
    <location>
        <begin position="1"/>
        <end position="293"/>
    </location>
</feature>
<feature type="active site" description="Nucleophile" evidence="1">
    <location>
        <position position="38"/>
    </location>
</feature>
<dbReference type="EC" id="5.4.99.25" evidence="1"/>
<dbReference type="EMBL" id="CP000473">
    <property type="protein sequence ID" value="ABJ87225.1"/>
    <property type="molecule type" value="Genomic_DNA"/>
</dbReference>
<dbReference type="SMR" id="Q01SZ5"/>
<dbReference type="FunCoup" id="Q01SZ5">
    <property type="interactions" value="566"/>
</dbReference>
<dbReference type="STRING" id="234267.Acid_6299"/>
<dbReference type="KEGG" id="sus:Acid_6299"/>
<dbReference type="eggNOG" id="COG0130">
    <property type="taxonomic scope" value="Bacteria"/>
</dbReference>
<dbReference type="HOGENOM" id="CLU_032087_0_0_0"/>
<dbReference type="InParanoid" id="Q01SZ5"/>
<dbReference type="OrthoDB" id="9802309at2"/>
<dbReference type="GO" id="GO:0003723">
    <property type="term" value="F:RNA binding"/>
    <property type="evidence" value="ECO:0007669"/>
    <property type="project" value="InterPro"/>
</dbReference>
<dbReference type="GO" id="GO:0160148">
    <property type="term" value="F:tRNA pseudouridine(55) synthase activity"/>
    <property type="evidence" value="ECO:0007669"/>
    <property type="project" value="UniProtKB-EC"/>
</dbReference>
<dbReference type="GO" id="GO:1990481">
    <property type="term" value="P:mRNA pseudouridine synthesis"/>
    <property type="evidence" value="ECO:0007669"/>
    <property type="project" value="TreeGrafter"/>
</dbReference>
<dbReference type="GO" id="GO:0031119">
    <property type="term" value="P:tRNA pseudouridine synthesis"/>
    <property type="evidence" value="ECO:0007669"/>
    <property type="project" value="UniProtKB-UniRule"/>
</dbReference>
<dbReference type="CDD" id="cd02573">
    <property type="entry name" value="PseudoU_synth_EcTruB"/>
    <property type="match status" value="1"/>
</dbReference>
<dbReference type="Gene3D" id="3.30.2350.10">
    <property type="entry name" value="Pseudouridine synthase"/>
    <property type="match status" value="1"/>
</dbReference>
<dbReference type="HAMAP" id="MF_01080">
    <property type="entry name" value="TruB_bact"/>
    <property type="match status" value="1"/>
</dbReference>
<dbReference type="InterPro" id="IPR020103">
    <property type="entry name" value="PsdUridine_synth_cat_dom_sf"/>
</dbReference>
<dbReference type="InterPro" id="IPR002501">
    <property type="entry name" value="PsdUridine_synth_N"/>
</dbReference>
<dbReference type="InterPro" id="IPR014780">
    <property type="entry name" value="tRNA_psdUridine_synth_TruB"/>
</dbReference>
<dbReference type="InterPro" id="IPR032819">
    <property type="entry name" value="TruB_C"/>
</dbReference>
<dbReference type="NCBIfam" id="TIGR00431">
    <property type="entry name" value="TruB"/>
    <property type="match status" value="1"/>
</dbReference>
<dbReference type="PANTHER" id="PTHR13767:SF2">
    <property type="entry name" value="PSEUDOURIDYLATE SYNTHASE TRUB1"/>
    <property type="match status" value="1"/>
</dbReference>
<dbReference type="PANTHER" id="PTHR13767">
    <property type="entry name" value="TRNA-PSEUDOURIDINE SYNTHASE"/>
    <property type="match status" value="1"/>
</dbReference>
<dbReference type="Pfam" id="PF16198">
    <property type="entry name" value="TruB_C_2"/>
    <property type="match status" value="1"/>
</dbReference>
<dbReference type="Pfam" id="PF01509">
    <property type="entry name" value="TruB_N"/>
    <property type="match status" value="1"/>
</dbReference>
<dbReference type="SUPFAM" id="SSF55120">
    <property type="entry name" value="Pseudouridine synthase"/>
    <property type="match status" value="1"/>
</dbReference>